<dbReference type="EC" id="2.1.1.103" evidence="1 2 5 6 7 8 10"/>
<dbReference type="EMBL" id="AY429590">
    <property type="protein sequence ID" value="AAR08195.1"/>
    <property type="molecule type" value="Genomic_DNA"/>
</dbReference>
<dbReference type="EMBL" id="KX755406">
    <property type="protein sequence ID" value="ASU92295.1"/>
    <property type="molecule type" value="Genomic_DNA"/>
</dbReference>
<dbReference type="EMBL" id="AL844509">
    <property type="protein sequence ID" value="CAD52560.1"/>
    <property type="molecule type" value="Genomic_DNA"/>
</dbReference>
<dbReference type="RefSeq" id="XP_001350151.1">
    <property type="nucleotide sequence ID" value="XM_001350115.1"/>
</dbReference>
<dbReference type="PDB" id="3UJ6">
    <property type="method" value="X-ray"/>
    <property type="resolution" value="1.97 A"/>
    <property type="chains" value="A=1-266"/>
</dbReference>
<dbReference type="PDB" id="3UJ7">
    <property type="method" value="X-ray"/>
    <property type="resolution" value="1.55 A"/>
    <property type="chains" value="A/B=1-266"/>
</dbReference>
<dbReference type="PDB" id="3UJ8">
    <property type="method" value="X-ray"/>
    <property type="resolution" value="1.35 A"/>
    <property type="chains" value="A=1-266"/>
</dbReference>
<dbReference type="PDB" id="3UJ9">
    <property type="method" value="X-ray"/>
    <property type="resolution" value="1.24 A"/>
    <property type="chains" value="A=1-266"/>
</dbReference>
<dbReference type="PDB" id="3UJA">
    <property type="method" value="X-ray"/>
    <property type="resolution" value="1.47 A"/>
    <property type="chains" value="A=1-266"/>
</dbReference>
<dbReference type="PDB" id="3UJB">
    <property type="method" value="X-ray"/>
    <property type="resolution" value="1.52 A"/>
    <property type="chains" value="A/B=1-266"/>
</dbReference>
<dbReference type="PDB" id="3UJC">
    <property type="method" value="X-ray"/>
    <property type="resolution" value="1.19 A"/>
    <property type="chains" value="A=1-266"/>
</dbReference>
<dbReference type="PDB" id="3UJD">
    <property type="method" value="X-ray"/>
    <property type="resolution" value="1.50 A"/>
    <property type="chains" value="A=1-266"/>
</dbReference>
<dbReference type="PDB" id="4FGZ">
    <property type="method" value="X-ray"/>
    <property type="resolution" value="1.99 A"/>
    <property type="chains" value="A/B=1-266"/>
</dbReference>
<dbReference type="PDB" id="4R6W">
    <property type="method" value="X-ray"/>
    <property type="resolution" value="1.59 A"/>
    <property type="chains" value="A/B=9-266"/>
</dbReference>
<dbReference type="PDB" id="4R6X">
    <property type="method" value="X-ray"/>
    <property type="resolution" value="2.55 A"/>
    <property type="chains" value="A/B=9-266"/>
</dbReference>
<dbReference type="PDBsum" id="3UJ6"/>
<dbReference type="PDBsum" id="3UJ7"/>
<dbReference type="PDBsum" id="3UJ8"/>
<dbReference type="PDBsum" id="3UJ9"/>
<dbReference type="PDBsum" id="3UJA"/>
<dbReference type="PDBsum" id="3UJB"/>
<dbReference type="PDBsum" id="3UJC"/>
<dbReference type="PDBsum" id="3UJD"/>
<dbReference type="PDBsum" id="4FGZ"/>
<dbReference type="PDBsum" id="4R6W"/>
<dbReference type="PDBsum" id="4R6X"/>
<dbReference type="SMR" id="Q8IDQ9"/>
<dbReference type="FunCoup" id="Q8IDQ9">
    <property type="interactions" value="20"/>
</dbReference>
<dbReference type="IntAct" id="Q8IDQ9">
    <property type="interactions" value="7"/>
</dbReference>
<dbReference type="STRING" id="36329.Q8IDQ9"/>
<dbReference type="BindingDB" id="Q8IDQ9"/>
<dbReference type="ChEMBL" id="CHEMBL2052030"/>
<dbReference type="DrugBank" id="DB11638">
    <property type="generic name" value="Artenimol"/>
</dbReference>
<dbReference type="PaxDb" id="5833-MAL13P1.214"/>
<dbReference type="EnsemblProtists" id="CAD52560">
    <property type="protein sequence ID" value="CAD52560"/>
    <property type="gene ID" value="PF3D7_1343000"/>
</dbReference>
<dbReference type="GeneID" id="813771"/>
<dbReference type="KEGG" id="pfa:PF3D7_1343000"/>
<dbReference type="VEuPathDB" id="PlasmoDB:PF3D7_1343000"/>
<dbReference type="VEuPathDB" id="PlasmoDB:Pf7G8-2_000445500"/>
<dbReference type="VEuPathDB" id="PlasmoDB:Pf7G8_130047400"/>
<dbReference type="VEuPathDB" id="PlasmoDB:PfCD01_130048600"/>
<dbReference type="VEuPathDB" id="PlasmoDB:PfDd2_130048800"/>
<dbReference type="VEuPathDB" id="PlasmoDB:PfGA01_130049100"/>
<dbReference type="VEuPathDB" id="PlasmoDB:PfGB4_130048900"/>
<dbReference type="VEuPathDB" id="PlasmoDB:PfGN01_130049700"/>
<dbReference type="VEuPathDB" id="PlasmoDB:PfHB3_130049300"/>
<dbReference type="VEuPathDB" id="PlasmoDB:PfIT_130048300"/>
<dbReference type="VEuPathDB" id="PlasmoDB:PfKE01_130048600"/>
<dbReference type="VEuPathDB" id="PlasmoDB:PfKH01_130047000"/>
<dbReference type="VEuPathDB" id="PlasmoDB:PfKH02_130045900"/>
<dbReference type="VEuPathDB" id="PlasmoDB:PfML01_130046900"/>
<dbReference type="VEuPathDB" id="PlasmoDB:PfNF135_130047400"/>
<dbReference type="VEuPathDB" id="PlasmoDB:PfNF166_130048000"/>
<dbReference type="VEuPathDB" id="PlasmoDB:PfNF54_130047700"/>
<dbReference type="VEuPathDB" id="PlasmoDB:PfSD01_130049700"/>
<dbReference type="VEuPathDB" id="PlasmoDB:PfSN01_130046000"/>
<dbReference type="VEuPathDB" id="PlasmoDB:PfTG01_130048700"/>
<dbReference type="HOGENOM" id="CLU_039068_7_0_1"/>
<dbReference type="InParanoid" id="Q8IDQ9"/>
<dbReference type="OMA" id="WTRKIKD"/>
<dbReference type="OrthoDB" id="8300214at2759"/>
<dbReference type="PhylomeDB" id="Q8IDQ9"/>
<dbReference type="BRENDA" id="2.1.1.103">
    <property type="organism ID" value="4889"/>
</dbReference>
<dbReference type="EvolutionaryTrace" id="Q8IDQ9"/>
<dbReference type="Proteomes" id="UP000001450">
    <property type="component" value="Chromosome 13"/>
</dbReference>
<dbReference type="GO" id="GO:0005794">
    <property type="term" value="C:Golgi apparatus"/>
    <property type="evidence" value="ECO:0000314"/>
    <property type="project" value="GeneDB"/>
</dbReference>
<dbReference type="GO" id="GO:0000139">
    <property type="term" value="C:Golgi membrane"/>
    <property type="evidence" value="ECO:0007669"/>
    <property type="project" value="UniProtKB-SubCell"/>
</dbReference>
<dbReference type="GO" id="GO:0000234">
    <property type="term" value="F:phosphoethanolamine N-methyltransferase activity"/>
    <property type="evidence" value="ECO:0000314"/>
    <property type="project" value="GeneDB"/>
</dbReference>
<dbReference type="GO" id="GO:0032259">
    <property type="term" value="P:methylation"/>
    <property type="evidence" value="ECO:0007669"/>
    <property type="project" value="UniProtKB-KW"/>
</dbReference>
<dbReference type="GO" id="GO:0006656">
    <property type="term" value="P:phosphatidylcholine biosynthetic process"/>
    <property type="evidence" value="ECO:0000314"/>
    <property type="project" value="GeneDB"/>
</dbReference>
<dbReference type="CDD" id="cd02440">
    <property type="entry name" value="AdoMet_MTases"/>
    <property type="match status" value="1"/>
</dbReference>
<dbReference type="FunFam" id="3.40.50.150:FF:000378">
    <property type="entry name" value="Phosphoethanolamine N-methyltransferase"/>
    <property type="match status" value="1"/>
</dbReference>
<dbReference type="Gene3D" id="3.40.50.150">
    <property type="entry name" value="Vaccinia Virus protein VP39"/>
    <property type="match status" value="1"/>
</dbReference>
<dbReference type="InterPro" id="IPR041698">
    <property type="entry name" value="Methyltransf_25"/>
</dbReference>
<dbReference type="InterPro" id="IPR029063">
    <property type="entry name" value="SAM-dependent_MTases_sf"/>
</dbReference>
<dbReference type="PANTHER" id="PTHR44307">
    <property type="entry name" value="PHOSPHOETHANOLAMINE METHYLTRANSFERASE"/>
    <property type="match status" value="1"/>
</dbReference>
<dbReference type="PANTHER" id="PTHR44307:SF2">
    <property type="entry name" value="PHOSPHOETHANOLAMINE METHYLTRANSFERASE ISOFORM X1"/>
    <property type="match status" value="1"/>
</dbReference>
<dbReference type="Pfam" id="PF13649">
    <property type="entry name" value="Methyltransf_25"/>
    <property type="match status" value="1"/>
</dbReference>
<dbReference type="SUPFAM" id="SSF53335">
    <property type="entry name" value="S-adenosyl-L-methionine-dependent methyltransferases"/>
    <property type="match status" value="1"/>
</dbReference>
<proteinExistence type="evidence at protein level"/>
<feature type="chain" id="PRO_0000459162" description="Phosphoethanolamine N-methyltransferase">
    <location>
        <begin position="1"/>
        <end position="266"/>
    </location>
</feature>
<feature type="active site" evidence="7">
    <location>
        <position position="19"/>
    </location>
</feature>
<feature type="active site" evidence="7">
    <location>
        <position position="132"/>
    </location>
</feature>
<feature type="binding site" evidence="7 10 25 26 27 28 29 31">
    <location>
        <position position="18"/>
    </location>
    <ligand>
        <name>phosphoethanolamine</name>
        <dbReference type="ChEBI" id="CHEBI:58190"/>
    </ligand>
</feature>
<feature type="binding site" evidence="7 10 25 26 27 28 29 31">
    <location>
        <position position="27"/>
    </location>
    <ligand>
        <name>phosphoethanolamine</name>
        <dbReference type="ChEBI" id="CHEBI:58190"/>
    </ligand>
</feature>
<feature type="binding site" evidence="7 8 10 22 23 27 30 31 32">
    <location>
        <position position="36"/>
    </location>
    <ligand>
        <name>S-adenosyl-L-methionine</name>
        <dbReference type="ChEBI" id="CHEBI:59789"/>
    </ligand>
</feature>
<feature type="binding site" evidence="7 8 10 22 23 27 30 31 32">
    <location>
        <position position="37"/>
    </location>
    <ligand>
        <name>S-adenosyl-L-methionine</name>
        <dbReference type="ChEBI" id="CHEBI:59789"/>
    </ligand>
</feature>
<feature type="binding site" evidence="7 8 10 22 23 27 30 31 32">
    <location>
        <position position="63"/>
    </location>
    <ligand>
        <name>S-adenosyl-L-methionine</name>
        <dbReference type="ChEBI" id="CHEBI:59789"/>
    </ligand>
</feature>
<feature type="binding site" evidence="7 8 10 22 23 27 30 31 32">
    <location>
        <position position="85"/>
    </location>
    <ligand>
        <name>S-adenosyl-L-methionine</name>
        <dbReference type="ChEBI" id="CHEBI:59789"/>
    </ligand>
</feature>
<feature type="binding site" evidence="7 8 10 22 23 27 30 31 32">
    <location>
        <position position="86"/>
    </location>
    <ligand>
        <name>S-adenosyl-L-methionine</name>
        <dbReference type="ChEBI" id="CHEBI:59789"/>
    </ligand>
</feature>
<feature type="binding site" evidence="7 8 10 22 23 27 30 31 32">
    <location>
        <position position="110"/>
    </location>
    <ligand>
        <name>S-adenosyl-L-methionine</name>
        <dbReference type="ChEBI" id="CHEBI:59789"/>
    </ligand>
</feature>
<feature type="binding site" evidence="7 8 10 22 23 27 30 31 32">
    <location>
        <position position="111"/>
    </location>
    <ligand>
        <name>S-adenosyl-L-methionine</name>
        <dbReference type="ChEBI" id="CHEBI:59789"/>
    </ligand>
</feature>
<feature type="binding site" evidence="7 8 10 22 23 27 30 31 32">
    <location>
        <position position="127"/>
    </location>
    <ligand>
        <name>S-adenosyl-L-methionine</name>
        <dbReference type="ChEBI" id="CHEBI:59789"/>
    </ligand>
</feature>
<feature type="binding site" evidence="7 10 25 26 27 28 29 31">
    <location>
        <position position="160"/>
    </location>
    <ligand>
        <name>phosphoethanolamine</name>
        <dbReference type="ChEBI" id="CHEBI:58190"/>
    </ligand>
</feature>
<feature type="binding site" evidence="7 10 25 26 27 28 29 31">
    <location>
        <position position="175"/>
    </location>
    <ligand>
        <name>phosphoethanolamine</name>
        <dbReference type="ChEBI" id="CHEBI:58190"/>
    </ligand>
</feature>
<feature type="binding site" evidence="7 10 25 26 27 28 29 31">
    <location>
        <position position="179"/>
    </location>
    <ligand>
        <name>phosphoethanolamine</name>
        <dbReference type="ChEBI" id="CHEBI:58190"/>
    </ligand>
</feature>
<feature type="binding site" evidence="7 10 25 26 27 28 29 31">
    <location>
        <position position="181"/>
    </location>
    <ligand>
        <name>phosphoethanolamine</name>
        <dbReference type="ChEBI" id="CHEBI:58190"/>
    </ligand>
</feature>
<feature type="binding site" evidence="7 10 25 26 27 28 29 31">
    <location>
        <position position="247"/>
    </location>
    <ligand>
        <name>phosphoethanolamine</name>
        <dbReference type="ChEBI" id="CHEBI:58190"/>
    </ligand>
</feature>
<feature type="mutagenesis site" description="Reduces activity." evidence="7">
    <original>Q</original>
    <variation>N</variation>
    <location>
        <position position="18"/>
    </location>
</feature>
<feature type="mutagenesis site" description="Abolishes activity." evidence="7">
    <original>Y</original>
    <variation>A</variation>
    <location>
        <position position="19"/>
    </location>
</feature>
<feature type="mutagenesis site" description="Reduces activity." evidence="7">
    <original>Y</original>
    <variation>F</variation>
    <location>
        <position position="19"/>
    </location>
</feature>
<feature type="mutagenesis site" description="Reduces activity." evidence="7">
    <original>Y</original>
    <variation>A</variation>
    <variation>F</variation>
    <location>
        <position position="27"/>
    </location>
</feature>
<feature type="mutagenesis site" description="Reduces activity." evidence="7">
    <original>S</original>
    <variation>A</variation>
    <location>
        <position position="37"/>
    </location>
</feature>
<feature type="mutagenesis site" description="Reduces activity. No significant effects on protein folding." evidence="5 7">
    <original>D</original>
    <variation>A</variation>
    <location>
        <position position="61"/>
    </location>
</feature>
<feature type="mutagenesis site" description="Reduces activity." evidence="5 7">
    <original>D</original>
    <variation>E</variation>
    <variation>N</variation>
    <location>
        <position position="61"/>
    </location>
</feature>
<feature type="mutagenesis site" description="No effect on activity." evidence="5">
    <original>G</original>
    <variation>A</variation>
    <location>
        <position position="63"/>
    </location>
</feature>
<feature type="mutagenesis site" description="Reduces activity. No significant effects on protein folding." evidence="5">
    <original>G</original>
    <variation>A</variation>
    <location>
        <position position="83"/>
    </location>
</feature>
<feature type="mutagenesis site" description="Reduces activity." evidence="5">
    <original>G</original>
    <variation>N</variation>
    <variation>E</variation>
    <location>
        <position position="83"/>
    </location>
</feature>
<feature type="mutagenesis site" description="Abolishes activity." evidence="7">
    <original>D</original>
    <variation>A</variation>
    <variation>N</variation>
    <location>
        <position position="85"/>
    </location>
</feature>
<feature type="mutagenesis site" description="Reduces activity." evidence="7">
    <original>I</original>
    <variation>A</variation>
    <variation>F</variation>
    <location>
        <position position="86"/>
    </location>
</feature>
<feature type="mutagenesis site" description="Reduces activity." evidence="7">
    <original>D</original>
    <variation>A</variation>
    <variation>N</variation>
    <location>
        <position position="110"/>
    </location>
</feature>
<feature type="mutagenesis site" description="Reduces activity when phosphoethanolamine is used as substrate. No effect on activity when phospho-dimethylethanolamine is used as substrate. No significant effects on protein folding." evidence="5 10">
    <original>D</original>
    <variation>A</variation>
    <location>
        <position position="128"/>
    </location>
</feature>
<feature type="mutagenesis site" description="Reduces activity when phosphoethanolamine is used as substrate. Slightly increases activity when phospho-dimethylethanolamine is used as substrate." evidence="5 10">
    <original>D</original>
    <variation>E</variation>
    <location>
        <position position="128"/>
    </location>
</feature>
<feature type="mutagenesis site" description="Reduces activity." evidence="5 10">
    <original>D</original>
    <variation>N</variation>
    <location>
        <position position="128"/>
    </location>
</feature>
<feature type="mutagenesis site" description="Reduces activity when phosphoethanolamine is used as substrate. No effect on activity when phospho-dimethylethanolamine is used as substrate." evidence="10">
    <original>D</original>
    <variation>Q</variation>
    <location>
        <position position="128"/>
    </location>
</feature>
<feature type="mutagenesis site" description="Abolishes activity." evidence="7">
    <original>H</original>
    <variation>A</variation>
    <variation>Q</variation>
    <variation>N</variation>
    <location>
        <position position="132"/>
    </location>
</feature>
<feature type="mutagenesis site" description="No effect on activity." evidence="5">
    <original>G</original>
    <variation>A</variation>
    <location>
        <position position="153"/>
    </location>
</feature>
<feature type="mutagenesis site" description="Abolishes activity." evidence="7">
    <original>Y</original>
    <variation>A</variation>
    <variation>F</variation>
    <location>
        <position position="160"/>
    </location>
</feature>
<feature type="mutagenesis site" description="Reduces activity." evidence="7">
    <original>Y</original>
    <variation>A</variation>
    <variation>F</variation>
    <location>
        <position position="175"/>
    </location>
</feature>
<feature type="mutagenesis site" description="Abolishes activity." evidence="7">
    <original>R</original>
    <variation>A</variation>
    <location>
        <position position="179"/>
    </location>
</feature>
<feature type="mutagenesis site" description="Reduces activity." evidence="7">
    <original>R</original>
    <variation>K</variation>
    <location>
        <position position="179"/>
    </location>
</feature>
<feature type="mutagenesis site" description="Reduces activity." evidence="7">
    <original>Y</original>
    <variation>A</variation>
    <variation>F</variation>
    <location>
        <position position="181"/>
    </location>
</feature>
<feature type="mutagenesis site" description="Abolishes activity." evidence="7">
    <original>K</original>
    <variation>A</variation>
    <variation>M</variation>
    <location>
        <position position="247"/>
    </location>
</feature>
<feature type="helix" evidence="33">
    <location>
        <begin position="10"/>
        <end position="16"/>
    </location>
</feature>
<feature type="turn" evidence="33">
    <location>
        <begin position="17"/>
        <end position="19"/>
    </location>
</feature>
<feature type="helix" evidence="33">
    <location>
        <begin position="21"/>
        <end position="31"/>
    </location>
</feature>
<feature type="helix" evidence="33">
    <location>
        <begin position="40"/>
        <end position="47"/>
    </location>
</feature>
<feature type="turn" evidence="33">
    <location>
        <begin position="48"/>
        <end position="50"/>
    </location>
</feature>
<feature type="strand" evidence="33">
    <location>
        <begin position="58"/>
        <end position="63"/>
    </location>
</feature>
<feature type="helix" evidence="33">
    <location>
        <begin position="68"/>
        <end position="77"/>
    </location>
</feature>
<feature type="strand" evidence="33">
    <location>
        <begin position="80"/>
        <end position="86"/>
    </location>
</feature>
<feature type="helix" evidence="33">
    <location>
        <begin position="88"/>
        <end position="96"/>
    </location>
</feature>
<feature type="strand" evidence="33">
    <location>
        <begin position="104"/>
        <end position="108"/>
    </location>
</feature>
<feature type="turn" evidence="33">
    <location>
        <begin position="111"/>
        <end position="113"/>
    </location>
</feature>
<feature type="strand" evidence="33">
    <location>
        <begin position="121"/>
        <end position="128"/>
    </location>
</feature>
<feature type="helix" evidence="33">
    <location>
        <begin position="130"/>
        <end position="132"/>
    </location>
</feature>
<feature type="helix" evidence="33">
    <location>
        <begin position="135"/>
        <end position="148"/>
    </location>
</feature>
<feature type="strand" evidence="33">
    <location>
        <begin position="149"/>
        <end position="163"/>
    </location>
</feature>
<feature type="helix" evidence="33">
    <location>
        <begin position="165"/>
        <end position="167"/>
    </location>
</feature>
<feature type="helix" evidence="33">
    <location>
        <begin position="170"/>
        <end position="179"/>
    </location>
</feature>
<feature type="helix" evidence="33">
    <location>
        <begin position="186"/>
        <end position="195"/>
    </location>
</feature>
<feature type="strand" evidence="33">
    <location>
        <begin position="199"/>
        <end position="205"/>
    </location>
</feature>
<feature type="helix" evidence="33">
    <location>
        <begin position="207"/>
        <end position="223"/>
    </location>
</feature>
<feature type="helix" evidence="33">
    <location>
        <begin position="225"/>
        <end position="231"/>
    </location>
</feature>
<feature type="helix" evidence="33">
    <location>
        <begin position="234"/>
        <end position="252"/>
    </location>
</feature>
<feature type="strand" evidence="33">
    <location>
        <begin position="255"/>
        <end position="264"/>
    </location>
</feature>
<name>PMT_PLAF7</name>
<evidence type="ECO:0000269" key="1">
    <source>
    </source>
</evidence>
<evidence type="ECO:0000269" key="2">
    <source>
    </source>
</evidence>
<evidence type="ECO:0000269" key="3">
    <source>
    </source>
</evidence>
<evidence type="ECO:0000269" key="4">
    <source>
    </source>
</evidence>
<evidence type="ECO:0000269" key="5">
    <source>
    </source>
</evidence>
<evidence type="ECO:0000269" key="6">
    <source>
    </source>
</evidence>
<evidence type="ECO:0000269" key="7">
    <source>
    </source>
</evidence>
<evidence type="ECO:0000269" key="8">
    <source>
    </source>
</evidence>
<evidence type="ECO:0000269" key="9">
    <source>
    </source>
</evidence>
<evidence type="ECO:0000269" key="10">
    <source>
    </source>
</evidence>
<evidence type="ECO:0000303" key="11">
    <source>
    </source>
</evidence>
<evidence type="ECO:0000303" key="12">
    <source>
    </source>
</evidence>
<evidence type="ECO:0000303" key="13">
    <source>
    </source>
</evidence>
<evidence type="ECO:0000303" key="14">
    <source>
    </source>
</evidence>
<evidence type="ECO:0000303" key="15">
    <source>
    </source>
</evidence>
<evidence type="ECO:0000303" key="16">
    <source>
    </source>
</evidence>
<evidence type="ECO:0000305" key="17"/>
<evidence type="ECO:0000312" key="18">
    <source>
        <dbReference type="EMBL" id="AAR08195.1"/>
    </source>
</evidence>
<evidence type="ECO:0000312" key="19">
    <source>
        <dbReference type="EMBL" id="ASU92295.1"/>
    </source>
</evidence>
<evidence type="ECO:0000312" key="20">
    <source>
        <dbReference type="EMBL" id="CAD52560.1"/>
    </source>
</evidence>
<evidence type="ECO:0000312" key="21">
    <source>
        <dbReference type="Proteomes" id="UP000001450"/>
    </source>
</evidence>
<evidence type="ECO:0007744" key="22">
    <source>
        <dbReference type="PDB" id="3UJ6"/>
    </source>
</evidence>
<evidence type="ECO:0007744" key="23">
    <source>
        <dbReference type="PDB" id="3UJ7"/>
    </source>
</evidence>
<evidence type="ECO:0007744" key="24">
    <source>
        <dbReference type="PDB" id="3UJ8"/>
    </source>
</evidence>
<evidence type="ECO:0007744" key="25">
    <source>
        <dbReference type="PDB" id="3UJ9"/>
    </source>
</evidence>
<evidence type="ECO:0007744" key="26">
    <source>
        <dbReference type="PDB" id="3UJA"/>
    </source>
</evidence>
<evidence type="ECO:0007744" key="27">
    <source>
        <dbReference type="PDB" id="3UJB"/>
    </source>
</evidence>
<evidence type="ECO:0007744" key="28">
    <source>
        <dbReference type="PDB" id="3UJC"/>
    </source>
</evidence>
<evidence type="ECO:0007744" key="29">
    <source>
        <dbReference type="PDB" id="3UJD"/>
    </source>
</evidence>
<evidence type="ECO:0007744" key="30">
    <source>
        <dbReference type="PDB" id="4FGZ"/>
    </source>
</evidence>
<evidence type="ECO:0007744" key="31">
    <source>
        <dbReference type="PDB" id="4R6W"/>
    </source>
</evidence>
<evidence type="ECO:0007744" key="32">
    <source>
        <dbReference type="PDB" id="4R6X"/>
    </source>
</evidence>
<evidence type="ECO:0007829" key="33">
    <source>
        <dbReference type="PDB" id="3UJC"/>
    </source>
</evidence>
<comment type="function">
    <text evidence="1 2 5 6 7 9">Catalyzes N-methylation of phosphoethanolamine, phosphomonomethylethanolamine and phosphodimethylethanolamine, the three methylation steps required to convert phosphoethanolamine to phosphocholine (PubMed:15073329, PubMed:15664981, PubMed:18178564, PubMed:18694927, PubMed:22117061). Has no ethanolamine- or phosphatidylethanolamine-N-methyltransferase activity (PubMed:15073329, PubMed:15664981). Required for gametocyte development, maturation and transmission to mosquitoes and for oocyst formation in the mosquito midgut (PubMed:24145416).</text>
</comment>
<comment type="catalytic activity">
    <reaction evidence="1 2 5 6 7 8 10">
        <text>phosphoethanolamine + S-adenosyl-L-methionine = N-methylethanolamine phosphate + S-adenosyl-L-homocysteine + H(+)</text>
        <dbReference type="Rhea" id="RHEA:20365"/>
        <dbReference type="ChEBI" id="CHEBI:15378"/>
        <dbReference type="ChEBI" id="CHEBI:57781"/>
        <dbReference type="ChEBI" id="CHEBI:57856"/>
        <dbReference type="ChEBI" id="CHEBI:58190"/>
        <dbReference type="ChEBI" id="CHEBI:59789"/>
        <dbReference type="EC" id="2.1.1.103"/>
    </reaction>
    <physiologicalReaction direction="left-to-right" evidence="1 2 5 6 7 8 10">
        <dbReference type="Rhea" id="RHEA:20366"/>
    </physiologicalReaction>
</comment>
<comment type="catalytic activity">
    <reaction evidence="1 2 5 6 7 8 10">
        <text>N-methylethanolamine phosphate + S-adenosyl-L-methionine = N,N-dimethylethanolamine phosphate + S-adenosyl-L-homocysteine + H(+)</text>
        <dbReference type="Rhea" id="RHEA:25321"/>
        <dbReference type="ChEBI" id="CHEBI:15378"/>
        <dbReference type="ChEBI" id="CHEBI:57781"/>
        <dbReference type="ChEBI" id="CHEBI:57856"/>
        <dbReference type="ChEBI" id="CHEBI:58641"/>
        <dbReference type="ChEBI" id="CHEBI:59789"/>
        <dbReference type="EC" id="2.1.1.103"/>
    </reaction>
    <physiologicalReaction direction="left-to-right" evidence="1 2 5 6 7 8 10">
        <dbReference type="Rhea" id="RHEA:25322"/>
    </physiologicalReaction>
</comment>
<comment type="catalytic activity">
    <reaction evidence="1 2 5 6 7 8 10">
        <text>N,N-dimethylethanolamine phosphate + S-adenosyl-L-methionine = phosphocholine + S-adenosyl-L-homocysteine + H(+)</text>
        <dbReference type="Rhea" id="RHEA:25325"/>
        <dbReference type="ChEBI" id="CHEBI:15378"/>
        <dbReference type="ChEBI" id="CHEBI:57856"/>
        <dbReference type="ChEBI" id="CHEBI:58641"/>
        <dbReference type="ChEBI" id="CHEBI:59789"/>
        <dbReference type="ChEBI" id="CHEBI:295975"/>
        <dbReference type="EC" id="2.1.1.103"/>
    </reaction>
    <physiologicalReaction direction="left-to-right" evidence="1 2 5 6 7 8 10">
        <dbReference type="Rhea" id="RHEA:25326"/>
    </physiologicalReaction>
</comment>
<comment type="activity regulation">
    <text evidence="1 8 9">Inhibited by phosphocholine (PubMed:15073329). Inhibited by hexadecylphosphocholine (miltefosine) (PubMed:15073329). Inhibited by S-adenosyl-l-homocysteine (PubMed:15073329). Weakly inhibited in vitro by amodiaquine, chloroquine and primaquine (PubMed:22771008). Inhibited by NSC-158011 (PubMed:24145416).</text>
</comment>
<comment type="biophysicochemical properties">
    <kinetics>
        <KM evidence="1">79 uM for phosphoethanolamine</KM>
        <KM evidence="5">66.1 uM for phosphoethanolamine</KM>
        <KM evidence="7">54.2 uM for phosphoethanolamine</KM>
        <KM evidence="10">54 uM for phosphoethanolamine</KM>
        <KM evidence="7">181 uM for phospho-monomethylethanolamine</KM>
        <KM evidence="7">66.8 uM for phospho-dimethylethanolamine</KM>
        <KM evidence="10">181 uM for phospho-dimethylethanolamine</KM>
        <KM evidence="1">153 uM for S-adenosyl-L-methionine (SAM)</KM>
        <KM evidence="5">35.23 uM for S-adenosyl-L-methionine (SAM)</KM>
        <KM evidence="7">29.9 uM for S-adenosyl-L-methionine (SAM)</KM>
        <KM evidence="7">33.1 uM for S-adenosyl-L-methionine (SAM) (with phospho-dimethylethanolamine)</KM>
        <Vmax evidence="1">1.2 nmol/min/mg enzyme for phosphoethanolamine</Vmax>
        <Vmax evidence="5">0.95 nmol/min/mg enzyme for phosphoethanolamine</Vmax>
        <Vmax evidence="1">1.2 nmol/min/mg enzyme for S-adenosyl-L-methionine (SAM)</Vmax>
        <Vmax evidence="5">0.3 nmol/min/mg enzyme for S-adenosyl-L-methionine (SAM)</Vmax>
        <text evidence="7 10">kcat is 109.0 min(-1) with phosphoethanolamine as substrate (PubMed:22117061, PubMed:25288796). kcat is 218.0 min(-1) with phospho-monomethylethanolamine as substrate (PubMed:22117061). kcat is 185.0 min(-1) with phospho-dimethylethanolamine as substrate (PubMed:22117061, PubMed:25288796). kcat is 23.5 min(-1) with S-adenosyl-L-methionine (and phosphoethanolamine) as substrate (PubMed:22117061). kcat is 29.2 min(-1) with S-adenosyl-L-methionine (and phospho-dimethylethanolamine) as substrate (PubMed:22117061).</text>
    </kinetics>
</comment>
<comment type="pathway">
    <text evidence="1 2 5 6">Phospholipid metabolism; phosphatidylcholine biosynthesis; phosphocholine from phosphoethanolamine.</text>
</comment>
<comment type="subunit">
    <text evidence="7 10">Monomer.</text>
</comment>
<comment type="subcellular location">
    <subcellularLocation>
        <location evidence="3 9">Golgi apparatus membrane</location>
        <topology evidence="3">Peripheral membrane protein</topology>
    </subcellularLocation>
    <subcellularLocation>
        <location evidence="9">Cytoplasm</location>
    </subcellularLocation>
</comment>
<comment type="developmental stage">
    <text evidence="1 3 9">Expressed throughout the intraerythrocytic life cycle of the parasite (at protein level) (PubMed:16704982, PubMed:24145416). High levels are detected during the trophozoite stage (at protein level) (PubMed:16704982). Expressed in all gametocyte stages (at protein level) (PubMed:24145416). Transition from the ring stage to the trophozoite stage, during which an active synthesis of new membranes takes place, results in a 3-fold increase in transcription (PubMed:15073329).</text>
</comment>
<comment type="induction">
    <text evidence="4">Transcription is down-regulated by choline (PubMed:17644653). Proteasomal degradation is promoted by choline (PubMed:17644653).</text>
</comment>
<comment type="disruption phenotype">
    <text evidence="6 9">Lack of phosphoethanolamine N-methyltransferase activity and disruption of phosphocholine synthesis from phosphoethanolamine (PubMed:18694927). Growth and morphological defects in trophozoites and schizonts (PubMed:18694927). Lower levels of parasitemia in the intraerythrocytic culture (PubMed:18694927). Reduced number of nuclei in the majority of schizonts (PubMed:18694927). Reduced viability of intraerythrocytic parasites (PubMed:18694927). Reduced gametocyte production (PubMed:24145416). Defects in gametocyte maturation resulting in the absence of stage-IV and -V gametocytes (PubMed:24145416). Lack of oocyst development in mosquitoes (PubMed:24145416).</text>
</comment>
<comment type="miscellaneous">
    <text evidence="9">Synthetic inhibitors of PMT block gametocyte development.</text>
</comment>
<comment type="similarity">
    <text evidence="17">Belongs to the class I-like SAM-binding methyltransferase superfamily. PEAMT family.</text>
</comment>
<accession>Q8IDQ9</accession>
<accession>Q6T755</accession>
<keyword id="KW-0002">3D-structure</keyword>
<keyword id="KW-0963">Cytoplasm</keyword>
<keyword id="KW-0333">Golgi apparatus</keyword>
<keyword id="KW-0444">Lipid biosynthesis</keyword>
<keyword id="KW-0443">Lipid metabolism</keyword>
<keyword id="KW-0472">Membrane</keyword>
<keyword id="KW-0489">Methyltransferase</keyword>
<keyword id="KW-0594">Phospholipid biosynthesis</keyword>
<keyword id="KW-1208">Phospholipid metabolism</keyword>
<keyword id="KW-1185">Reference proteome</keyword>
<keyword id="KW-0949">S-adenosyl-L-methionine</keyword>
<keyword id="KW-0808">Transferase</keyword>
<reference evidence="18" key="1">
    <citation type="journal article" date="2004" name="Proc. Natl. Acad. Sci. U.S.A.">
        <title>A pathway for phosphatidylcholine biosynthesis in Plasmodium falciparum involving phosphoethanolamine methylation.</title>
        <authorList>
            <person name="Pessi G."/>
            <person name="Kociubinski G."/>
            <person name="Mamoun C.B."/>
        </authorList>
    </citation>
    <scope>NUCLEOTIDE SEQUENCE [GENOMIC DNA]</scope>
    <scope>FUNCTION</scope>
    <scope>CATALYTIC ACTIVITY</scope>
    <scope>ACTIVITY REGULATION</scope>
    <scope>BIOPHYSICOCHEMICAL PROPERTIES</scope>
    <scope>SUBSTRATE SPECIFICITY</scope>
    <scope>PATHWAY</scope>
    <scope>DEVELOPMENTAL STAGE</scope>
    <source>
        <strain evidence="11">3D7</strain>
    </source>
</reference>
<reference evidence="19" key="2">
    <citation type="submission" date="2016-08" db="EMBL/GenBank/DDBJ databases">
        <title>Characterization of indian phosphoethanolamine methyltransferase of Plasmodium falciparum.</title>
        <authorList>
            <person name="Singh J."/>
            <person name="Vijay S."/>
            <person name="Kadian K."/>
            <person name="Rawal R."/>
            <person name="Sharma A."/>
            <person name="Kumar M."/>
        </authorList>
    </citation>
    <scope>NUCLEOTIDE SEQUENCE [GENOMIC DNA]</scope>
</reference>
<reference evidence="21" key="3">
    <citation type="journal article" date="2002" name="Nature">
        <title>Genome sequence of the human malaria parasite Plasmodium falciparum.</title>
        <authorList>
            <person name="Gardner M.J."/>
            <person name="Hall N."/>
            <person name="Fung E."/>
            <person name="White O."/>
            <person name="Berriman M."/>
            <person name="Hyman R.W."/>
            <person name="Carlton J.M."/>
            <person name="Pain A."/>
            <person name="Nelson K.E."/>
            <person name="Bowman S."/>
            <person name="Paulsen I.T."/>
            <person name="James K.D."/>
            <person name="Eisen J.A."/>
            <person name="Rutherford K.M."/>
            <person name="Salzberg S.L."/>
            <person name="Craig A."/>
            <person name="Kyes S."/>
            <person name="Chan M.-S."/>
            <person name="Nene V."/>
            <person name="Shallom S.J."/>
            <person name="Suh B."/>
            <person name="Peterson J."/>
            <person name="Angiuoli S."/>
            <person name="Pertea M."/>
            <person name="Allen J."/>
            <person name="Selengut J."/>
            <person name="Haft D."/>
            <person name="Mather M.W."/>
            <person name="Vaidya A.B."/>
            <person name="Martin D.M.A."/>
            <person name="Fairlamb A.H."/>
            <person name="Fraunholz M.J."/>
            <person name="Roos D.S."/>
            <person name="Ralph S.A."/>
            <person name="McFadden G.I."/>
            <person name="Cummings L.M."/>
            <person name="Subramanian G.M."/>
            <person name="Mungall C."/>
            <person name="Venter J.C."/>
            <person name="Carucci D.J."/>
            <person name="Hoffman S.L."/>
            <person name="Newbold C."/>
            <person name="Davis R.W."/>
            <person name="Fraser C.M."/>
            <person name="Barrell B.G."/>
        </authorList>
    </citation>
    <scope>NUCLEOTIDE SEQUENCE [LARGE SCALE GENOMIC DNA]</scope>
    <source>
        <strain evidence="21">3D7</strain>
    </source>
</reference>
<reference evidence="21" key="4">
    <citation type="journal article" date="2002" name="Nature">
        <title>Sequence of Plasmodium falciparum chromosomes 1, 3-9 and 13.</title>
        <authorList>
            <person name="Hall N."/>
            <person name="Pain A."/>
            <person name="Berriman M."/>
            <person name="Churcher C.M."/>
            <person name="Harris B."/>
            <person name="Harris D."/>
            <person name="Mungall K.L."/>
            <person name="Bowman S."/>
            <person name="Atkin R."/>
            <person name="Baker S."/>
            <person name="Barron A."/>
            <person name="Brooks K."/>
            <person name="Buckee C.O."/>
            <person name="Burrows C."/>
            <person name="Cherevach I."/>
            <person name="Chillingworth C."/>
            <person name="Chillingworth T."/>
            <person name="Christodoulou Z."/>
            <person name="Clark L."/>
            <person name="Clark R."/>
            <person name="Corton C."/>
            <person name="Cronin A."/>
            <person name="Davies R.M."/>
            <person name="Davis P."/>
            <person name="Dear P."/>
            <person name="Dearden F."/>
            <person name="Doggett J."/>
            <person name="Feltwell T."/>
            <person name="Goble A."/>
            <person name="Goodhead I."/>
            <person name="Gwilliam R."/>
            <person name="Hamlin N."/>
            <person name="Hance Z."/>
            <person name="Harper D."/>
            <person name="Hauser H."/>
            <person name="Hornsby T."/>
            <person name="Holroyd S."/>
            <person name="Horrocks P."/>
            <person name="Humphray S."/>
            <person name="Jagels K."/>
            <person name="James K.D."/>
            <person name="Johnson D."/>
            <person name="Kerhornou A."/>
            <person name="Knights A."/>
            <person name="Konfortov B."/>
            <person name="Kyes S."/>
            <person name="Larke N."/>
            <person name="Lawson D."/>
            <person name="Lennard N."/>
            <person name="Line A."/>
            <person name="Maddison M."/>
            <person name="Mclean J."/>
            <person name="Mooney P."/>
            <person name="Moule S."/>
            <person name="Murphy L."/>
            <person name="Oliver K."/>
            <person name="Ormond D."/>
            <person name="Price C."/>
            <person name="Quail M.A."/>
            <person name="Rabbinowitsch E."/>
            <person name="Rajandream M.A."/>
            <person name="Rutter S."/>
            <person name="Rutherford K.M."/>
            <person name="Sanders M."/>
            <person name="Simmonds M."/>
            <person name="Seeger K."/>
            <person name="Sharp S."/>
            <person name="Smith R."/>
            <person name="Squares R."/>
            <person name="Squares S."/>
            <person name="Stevens K."/>
            <person name="Taylor K."/>
            <person name="Tivey A."/>
            <person name="Unwin L."/>
            <person name="Whitehead S."/>
            <person name="Woodward J.R."/>
            <person name="Sulston J.E."/>
            <person name="Craig A."/>
            <person name="Newbold C."/>
            <person name="Barrell B.G."/>
        </authorList>
    </citation>
    <scope>NUCLEOTIDE SEQUENCE [LARGE SCALE GENOMIC DNA]</scope>
    <source>
        <strain evidence="21">3D7</strain>
    </source>
</reference>
<reference evidence="17" key="5">
    <citation type="journal article" date="2005" name="J. Biol. Chem.">
        <title>In vivo evidence for the specificity of Plasmodium falciparum phosphoethanolamine methyltransferase and its coupling to the Kennedy pathway.</title>
        <authorList>
            <person name="Pessi G."/>
            <person name="Choi J.Y."/>
            <person name="Reynolds J.M."/>
            <person name="Voelker D.R."/>
            <person name="Mamoun C.B."/>
        </authorList>
    </citation>
    <scope>FUNCTION</scope>
    <scope>CATALYTIC ACTIVITY</scope>
    <scope>SUBSTRATE SPECIFICITY</scope>
    <scope>PATHWAY</scope>
</reference>
<reference evidence="17" key="6">
    <citation type="journal article" date="2006" name="J. Biol. Chem.">
        <title>Localization of the phosphoethanolamine methyltransferase of the human malaria parasite Plasmodium falciparum to the Golgi apparatus.</title>
        <authorList>
            <person name="Witola W.H."/>
            <person name="Pessi G."/>
            <person name="El Bissati K."/>
            <person name="Reynolds J.M."/>
            <person name="Mamoun C.B."/>
        </authorList>
    </citation>
    <scope>SUBCELLULAR LOCATION</scope>
    <scope>DEVELOPMENTAL STAGE</scope>
</reference>
<reference evidence="17" key="7">
    <citation type="journal article" date="2007" name="Eukaryot. Cell">
        <title>Choline induces transcriptional repression and proteasomal degradation of the malarial phosphoethanolamine methyltransferase.</title>
        <authorList>
            <person name="Witola W.H."/>
            <person name="Ben Mamoun C."/>
        </authorList>
    </citation>
    <scope>INDUCTION</scope>
</reference>
<reference evidence="17" key="8">
    <citation type="journal article" date="2008" name="J. Biol. Chem.">
        <title>Biochemical and genetic analysis of the phosphoethanolamine methyltransferase of the human malaria parasite Plasmodium falciparum.</title>
        <authorList>
            <person name="Reynolds J.M."/>
            <person name="Takebe S."/>
            <person name="Choi J.Y."/>
            <person name="El Bissati K."/>
            <person name="Witola W.H."/>
            <person name="Bobenchik A.M."/>
            <person name="Hoch J.C."/>
            <person name="Voelker D.R."/>
            <person name="Mamoun C.B."/>
        </authorList>
    </citation>
    <scope>FUNCTION</scope>
    <scope>CATALYTIC ACTIVITY</scope>
    <scope>BIOPHYSICOCHEMICAL PROPERTIES</scope>
    <scope>PATHWAY</scope>
    <scope>MUTAGENESIS OF ASP-61; GLY-63; GLY-83; ASP-128 AND GLY-153</scope>
</reference>
<reference evidence="17" key="9">
    <citation type="journal article" date="2008" name="J. Biol. Chem.">
        <title>Disruption of the Plasmodium falciparum PfPMT gene results in a complete loss of phosphatidylcholine biosynthesis via the serine-decarboxylase-phosphoethanolamine-methyltransferase pathway and severe growth and survival defects.</title>
        <authorList>
            <person name="Witola W.H."/>
            <person name="El Bissati K."/>
            <person name="Pessi G."/>
            <person name="Xie C."/>
            <person name="Roepe P.D."/>
            <person name="Mamoun C.B."/>
        </authorList>
    </citation>
    <scope>FUNCTION</scope>
    <scope>CATALYTIC ACTIVITY</scope>
    <scope>PATHWAY</scope>
    <scope>DISRUPTION PHENOTYPE</scope>
</reference>
<reference evidence="17" key="10">
    <citation type="journal article" date="2013" name="Proc. Natl. Acad. Sci. U.S.A.">
        <title>Plasmodium falciparum phosphoethanolamine methyltransferase is essential for malaria transmission.</title>
        <authorList>
            <person name="Bobenchik A.M."/>
            <person name="Witola W.H."/>
            <person name="Augagneur Y."/>
            <person name="Nic Lochlainn L."/>
            <person name="Garg A."/>
            <person name="Pachikara N."/>
            <person name="Choi J.Y."/>
            <person name="Zhao Y.O."/>
            <person name="Usmani-Brown S."/>
            <person name="Lee A."/>
            <person name="Adjalley S.H."/>
            <person name="Samanta S."/>
            <person name="Fidock D.A."/>
            <person name="Voelker D.R."/>
            <person name="Fikrig E."/>
            <person name="Ben Mamoun C."/>
        </authorList>
    </citation>
    <scope>FUNCTION</scope>
    <scope>ACTIVITY REGULATION</scope>
    <scope>SUBCELLULAR LOCATION</scope>
    <scope>DEVELOPMENTAL STAGE</scope>
    <scope>DISRUPTION PHENOTYPE</scope>
    <source>
        <strain evidence="16">3D7</strain>
        <strain evidence="16">NF54</strain>
    </source>
</reference>
<reference evidence="30" key="11">
    <citation type="journal article" date="2012" name="Bioorg. Med. Chem. Lett.">
        <title>Crystal structure of phosphoethanolamine methyltransferase from Plasmodium falciparum in complex with amodiaquine.</title>
        <authorList>
            <person name="Lee S.G."/>
            <person name="Alpert T.D."/>
            <person name="Jez J.M."/>
        </authorList>
    </citation>
    <scope>X-RAY CRYSTALLOGRAPHY (1.99 ANGSTROMS) IN COMPLEX WITH S-ADENOSYL-L-HOMOCYSTEINE; SYNTHETIC INHIBITOR AND PHOSPHATE ION</scope>
    <scope>CATALYTIC ACTIVITY</scope>
    <scope>ACTIVITY REGULATION</scope>
</reference>
<reference evidence="22 23 24 25 26 27 28 29" key="12">
    <citation type="journal article" date="2012" name="J. Biol. Chem.">
        <title>Structure and reaction mechanism of phosphoethanolamine methyltransferase from the malaria parasite Plasmodium falciparum: an antiparasitic drug target.</title>
        <authorList>
            <person name="Lee S.G."/>
            <person name="Kim Y."/>
            <person name="Alpert T.D."/>
            <person name="Nagata A."/>
            <person name="Jez J.M."/>
        </authorList>
    </citation>
    <scope>X-RAY CRYSTALLOGRAPHY (1.19 ANGSTROMS) OF WILD-TYPE AND MUTANTS PHE-19 AND ALA-132 IN COMPLEX WITH PHOSPHOCHOLINE; PHOSPHOETHANOLAMINE; S-ADENOSYL-L-METHIONINE; S-ADENOSYL-L-HOMOCYSTEINE; SYNTHETIC INHIBITOR AND PHOSPHATE ION</scope>
    <scope>CATALYTIC ACTIVITY</scope>
    <scope>SUBUNIT</scope>
    <scope>BIOPHYSICOCHEMICAL PROPERTIES</scope>
    <scope>ACTIVE SITE</scope>
    <scope>MUTAGENESIS OF GLN-18; TYR-19; TYR-27; SER-37; ASP-61; ASP-85; ILE-86; ASP-110; HIS-132; TYR-160; TYR-175; ARG-179; TYR-181 AND LYS-247</scope>
</reference>
<reference evidence="31 32" key="13">
    <citation type="journal article" date="2014" name="J. Biol. Chem.">
        <title>An alternative mechanism for the methylation of phosphoethanolamine catalyzed by Plasmodium falciparum phosphoethanolamine methyltransferase.</title>
        <authorList>
            <person name="Saen-Oon S."/>
            <person name="Lee S.G."/>
            <person name="Jez J.M."/>
            <person name="Guallar V."/>
        </authorList>
    </citation>
    <scope>X-RAY CRYSTALLOGRAPHY (1.59 ANGSTROMS) OF MUTANT ALA-128 IN COMPLEX WITH S-ADENOSYL-L-HOMOCYSTEINE AND PHOSPHOCHOLINE</scope>
    <scope>CATALYTIC ACTIVITY</scope>
    <scope>BIOPHYSICOCHEMICAL PROPERTIES</scope>
    <scope>SUBUNIT</scope>
    <scope>MUTAGENESIS OF ASP-128</scope>
</reference>
<organism evidence="21">
    <name type="scientific">Plasmodium falciparum (isolate 3D7)</name>
    <dbReference type="NCBI Taxonomy" id="36329"/>
    <lineage>
        <taxon>Eukaryota</taxon>
        <taxon>Sar</taxon>
        <taxon>Alveolata</taxon>
        <taxon>Apicomplexa</taxon>
        <taxon>Aconoidasida</taxon>
        <taxon>Haemosporida</taxon>
        <taxon>Plasmodiidae</taxon>
        <taxon>Plasmodium</taxon>
        <taxon>Plasmodium (Laverania)</taxon>
    </lineage>
</organism>
<protein>
    <recommendedName>
        <fullName evidence="17">Phosphoethanolamine N-methyltransferase</fullName>
        <shortName evidence="11 12 13 14 15">PfPMT</shortName>
        <ecNumber evidence="1 2 5 6 7 8 10">2.1.1.103</ecNumber>
    </recommendedName>
</protein>
<gene>
    <name evidence="17" type="primary">PMT</name>
    <name evidence="20" type="ORF">PF3D7_1343000</name>
</gene>
<sequence length="266" mass="31043">MTLIENLNSDKTFLENNQYTDEGVKVYEFIFGENYISSGGLEATKKILSDIELNENSKVLDIGSGLGGGCMYINEKYGAHTHGIDICSNIVNMANERVSGNNKIIFEANDILTKEFPENNFDLIYSRDAILHLSLENKNKLFQKCYKWLKPTGTLLITDYCATEKENWDDEFKEYVKQRKYTLITVEEYADILTACNFKNVVSKDLSDYWNQLLEVEHKYLHENKEEFLKLFSEKKFISLDDGWSRKIKDSKRKMQRWGYFKATKN</sequence>